<sequence length="871" mass="93811">MAAVDSDIEPLPRGGFRCCLCHITTANQPSLDAHLGGRKHRHLVELRATRKAQGLRSVFVSGFPRDVDSTQLSEYFQAFGPVASVVMDKDKGVFAIVEMGDLGAREAVLSQPQHSLGGRRLRVRPREQIEFQSPASRSPKRVAPDSHQLIKALAEAPDVEAQMVKLVGLRELSEAERQLRSLVVALMQEVFAEFFPGCVVHPFGSSINSFDVHGCDLDLFLDLGDLDEPQPAPKAPESPSLDSALASPLDPQALACTPASPPDSQPPASPQDSEALDFEAPSSSLAPRTPDSALASETLASPRSLPPASPLQEDQGDGDQGKAVELAEALKGEKAEGGAMLELVGSILRGCVPGVYRVQTVPSARCPVVKFCHRPSGLHGDISLSNRLALHNSRFLSLCSELDGRVRPLVYTLRCWAQGRGLSGSGPLLNNYALTLLVIYFLQTRDPPVLPTVSQLTQKAGEQVEVDGWDCSFPRDASRLEPSTNKEPLSSLLAQFFSCVSCWDLRGSLLSLREGQALSVAGGLPSNLSEGLRLGPMNLQDPFDLSHNVAANVTSRVAGRLQNCCRAAANYCRSLQYQRRSSRGRDWGLLPLLQPSSPSSILSATPIPLPPASFTQLTAVLAQVLREALGCHIEQGTKRLRSEGGGPGEPPQGGTSKRAKLDGQKKSCEEGPEEQQGCAGEHGEDGVEEMVIEVGESVQDWVMRSPGQLGELPLMTGKHLATREEGQSGTAALAKQGPRGPEAACEGSQAEAEKRVSLTVSWRCALWHRVWQGRRRARRRLQQQIKEGGGSGAGSGAEWLATEAQVTRELRGLSSTEQRPEAEPLLTFVASTSQADQSLTVTPLQDSQGLFPDLHHFLQVFLPQALRNLLK</sequence>
<proteinExistence type="evidence at transcript level"/>
<name>STPAP_BOVIN</name>
<evidence type="ECO:0000250" key="1">
    <source>
        <dbReference type="UniProtKB" id="Q3MHT4"/>
    </source>
</evidence>
<evidence type="ECO:0000250" key="2">
    <source>
        <dbReference type="UniProtKB" id="Q9H6E5"/>
    </source>
</evidence>
<evidence type="ECO:0000250" key="3">
    <source>
        <dbReference type="UniProtKB" id="Q9NVV4"/>
    </source>
</evidence>
<evidence type="ECO:0000255" key="4"/>
<evidence type="ECO:0000255" key="5">
    <source>
        <dbReference type="PROSITE-ProRule" id="PRU00130"/>
    </source>
</evidence>
<evidence type="ECO:0000255" key="6">
    <source>
        <dbReference type="PROSITE-ProRule" id="PRU00176"/>
    </source>
</evidence>
<evidence type="ECO:0000256" key="7">
    <source>
        <dbReference type="SAM" id="MobiDB-lite"/>
    </source>
</evidence>
<evidence type="ECO:0000305" key="8"/>
<comment type="function">
    <text evidence="2">Poly(A) polymerase that creates the 3'-poly(A) tail of specific pre-mRNAs. Localizes to nuclear speckles together with PIP5K1A and mediates polyadenylation of a select set of mRNAs, such as HMOX1. In addition to polyadenylation, it is also required for the 3'-end cleavage of pre-mRNAs: binds to the 3'UTR of targeted pre-mRNAs and promotes the recruitment and assembly of the CPSF complex on the 3'UTR of pre-mRNAs. In addition to adenylyltransferase activity, also has uridylyltransferase activity. However, the ATP ratio is higher than UTP in cells, suggesting that it functions primarily as a poly(A) polymerase. Acts as a specific terminal uridylyltransferase for U6 snRNA in vitro: responsible for a controlled elongation reaction that results in the restoration of the four 3'-terminal UMP-residues found in newly transcribed U6 snRNA. Not involved in replication-dependent histone mRNA degradation.</text>
</comment>
<comment type="catalytic activity">
    <reaction evidence="2">
        <text>RNA(n) + UTP = RNA(n)-3'-uridine ribonucleotide + diphosphate</text>
        <dbReference type="Rhea" id="RHEA:14785"/>
        <dbReference type="Rhea" id="RHEA-COMP:14527"/>
        <dbReference type="Rhea" id="RHEA-COMP:17348"/>
        <dbReference type="ChEBI" id="CHEBI:33019"/>
        <dbReference type="ChEBI" id="CHEBI:46398"/>
        <dbReference type="ChEBI" id="CHEBI:140395"/>
        <dbReference type="ChEBI" id="CHEBI:173116"/>
        <dbReference type="EC" id="2.7.7.52"/>
    </reaction>
</comment>
<comment type="catalytic activity">
    <reaction evidence="2">
        <text>RNA(n) + ATP = RNA(n)-3'-adenine ribonucleotide + diphosphate</text>
        <dbReference type="Rhea" id="RHEA:11332"/>
        <dbReference type="Rhea" id="RHEA-COMP:14527"/>
        <dbReference type="Rhea" id="RHEA-COMP:17347"/>
        <dbReference type="ChEBI" id="CHEBI:30616"/>
        <dbReference type="ChEBI" id="CHEBI:33019"/>
        <dbReference type="ChEBI" id="CHEBI:140395"/>
        <dbReference type="ChEBI" id="CHEBI:173115"/>
        <dbReference type="EC" id="2.7.7.19"/>
    </reaction>
</comment>
<comment type="cofactor">
    <cofactor evidence="2">
        <name>Mg(2+)</name>
        <dbReference type="ChEBI" id="CHEBI:18420"/>
    </cofactor>
    <cofactor evidence="3">
        <name>Mn(2+)</name>
        <dbReference type="ChEBI" id="CHEBI:29035"/>
    </cofactor>
    <text evidence="2">Binds 1 divalent cation per subunit.</text>
</comment>
<comment type="activity regulation">
    <text evidence="2">Adenylyltransferase activity is specifically phosphatidylinositol 4,5-bisphosphate (PtdIns(4,5)P2).</text>
</comment>
<comment type="subunit">
    <text evidence="2">Associates with the cleavage and polyadenylation specificity factor (CPSF) complex. Interacts with CPSF1 and CPSF3; the interaction is direct. Interacts with PIP5K1A.</text>
</comment>
<comment type="subcellular location">
    <subcellularLocation>
        <location evidence="2">Nucleus</location>
        <location evidence="2">Nucleolus</location>
    </subcellularLocation>
    <subcellularLocation>
        <location evidence="2">Nucleus speckle</location>
    </subcellularLocation>
</comment>
<comment type="domain">
    <text evidence="2">The zinc-finger domain is required for terminal uridylyltransferase activity. Together with the RRM domain, binds the 5'-area of U6 snRNA.</text>
</comment>
<comment type="domain">
    <text evidence="2">The RRM domain is required for terminal uridylyltransferase activity. Together with the zinc-finger domain, binds the 5'-area of U6 snRNA.</text>
</comment>
<comment type="domain">
    <text evidence="2">The proline-rich region is dispensable for terminal uridylyltransferase activity.</text>
</comment>
<comment type="PTM">
    <text evidence="2">Phosphorylated by CK1 in the proline-rich (Pro-rich) region.</text>
</comment>
<comment type="similarity">
    <text evidence="8">Belongs to the DNA polymerase type-B-like family.</text>
</comment>
<feature type="chain" id="PRO_0000254185" description="Speckle targeted PIP5K1A-regulated poly(A) polymerase">
    <location>
        <begin position="1"/>
        <end position="871"/>
    </location>
</feature>
<feature type="domain" description="RRM" evidence="6">
    <location>
        <begin position="56"/>
        <end position="128"/>
    </location>
</feature>
<feature type="domain" description="PAP-associated" evidence="4">
    <location>
        <begin position="489"/>
        <end position="547"/>
    </location>
</feature>
<feature type="zinc finger region" description="Matrin-type" evidence="5">
    <location>
        <begin position="16"/>
        <end position="46"/>
    </location>
</feature>
<feature type="region of interest" description="Disordered" evidence="7">
    <location>
        <begin position="252"/>
        <end position="321"/>
    </location>
</feature>
<feature type="region of interest" description="KA1; binds the bulging loops of U6 snRNA but is dispensable for terminal uridylyltransferase activity" evidence="2">
    <location>
        <begin position="596"/>
        <end position="871"/>
    </location>
</feature>
<feature type="region of interest" description="Disordered" evidence="7">
    <location>
        <begin position="636"/>
        <end position="684"/>
    </location>
</feature>
<feature type="compositionally biased region" description="Pro residues" evidence="7">
    <location>
        <begin position="259"/>
        <end position="269"/>
    </location>
</feature>
<feature type="compositionally biased region" description="Basic and acidic residues" evidence="7">
    <location>
        <begin position="659"/>
        <end position="669"/>
    </location>
</feature>
<feature type="binding site" evidence="2">
    <location>
        <position position="205"/>
    </location>
    <ligand>
        <name>ATP</name>
        <dbReference type="ChEBI" id="CHEBI:30616"/>
    </ligand>
</feature>
<feature type="binding site" evidence="2">
    <location>
        <position position="216"/>
    </location>
    <ligand>
        <name>Mg(2+)</name>
        <dbReference type="ChEBI" id="CHEBI:18420"/>
        <note>catalytic</note>
    </ligand>
</feature>
<feature type="binding site" evidence="2">
    <location>
        <position position="216"/>
    </location>
    <ligand>
        <name>UTP</name>
        <dbReference type="ChEBI" id="CHEBI:46398"/>
    </ligand>
</feature>
<feature type="binding site" evidence="2">
    <location>
        <position position="218"/>
    </location>
    <ligand>
        <name>Mg(2+)</name>
        <dbReference type="ChEBI" id="CHEBI:18420"/>
        <note>catalytic</note>
    </ligand>
</feature>
<feature type="binding site" evidence="2">
    <location>
        <position position="218"/>
    </location>
    <ligand>
        <name>UTP</name>
        <dbReference type="ChEBI" id="CHEBI:46398"/>
    </ligand>
</feature>
<feature type="binding site" evidence="2">
    <location>
        <position position="392"/>
    </location>
    <ligand>
        <name>ATP</name>
        <dbReference type="ChEBI" id="CHEBI:30616"/>
    </ligand>
</feature>
<feature type="binding site" evidence="2">
    <location>
        <position position="392"/>
    </location>
    <ligand>
        <name>UTP</name>
        <dbReference type="ChEBI" id="CHEBI:46398"/>
    </ligand>
</feature>
<feature type="binding site" evidence="2">
    <location>
        <position position="414"/>
    </location>
    <ligand>
        <name>UTP</name>
        <dbReference type="ChEBI" id="CHEBI:46398"/>
    </ligand>
</feature>
<feature type="binding site" evidence="2">
    <location>
        <position position="432"/>
    </location>
    <ligand>
        <name>UTP</name>
        <dbReference type="ChEBI" id="CHEBI:46398"/>
    </ligand>
</feature>
<feature type="binding site" evidence="2">
    <location>
        <position position="547"/>
    </location>
    <ligand>
        <name>UTP</name>
        <dbReference type="ChEBI" id="CHEBI:46398"/>
    </ligand>
</feature>
<feature type="modified residue" description="Phosphoserine" evidence="1">
    <location>
        <position position="748"/>
    </location>
</feature>
<accession>Q1JPD6</accession>
<keyword id="KW-0067">ATP-binding</keyword>
<keyword id="KW-0460">Magnesium</keyword>
<keyword id="KW-0464">Manganese</keyword>
<keyword id="KW-0479">Metal-binding</keyword>
<keyword id="KW-0507">mRNA processing</keyword>
<keyword id="KW-0547">Nucleotide-binding</keyword>
<keyword id="KW-0548">Nucleotidyltransferase</keyword>
<keyword id="KW-0539">Nucleus</keyword>
<keyword id="KW-0597">Phosphoprotein</keyword>
<keyword id="KW-1185">Reference proteome</keyword>
<keyword id="KW-0694">RNA-binding</keyword>
<keyword id="KW-0808">Transferase</keyword>
<keyword id="KW-0862">Zinc</keyword>
<keyword id="KW-0863">Zinc-finger</keyword>
<reference key="1">
    <citation type="journal article" date="2005" name="BMC Genomics">
        <title>Characterization of 954 bovine full-CDS cDNA sequences.</title>
        <authorList>
            <person name="Harhay G.P."/>
            <person name="Sonstegard T.S."/>
            <person name="Keele J.W."/>
            <person name="Heaton M.P."/>
            <person name="Clawson M.L."/>
            <person name="Snelling W.M."/>
            <person name="Wiedmann R.T."/>
            <person name="Van Tassell C.P."/>
            <person name="Smith T.P.L."/>
        </authorList>
    </citation>
    <scope>NUCLEOTIDE SEQUENCE [LARGE SCALE MRNA]</scope>
</reference>
<protein>
    <recommendedName>
        <fullName>Speckle targeted PIP5K1A-regulated poly(A) polymerase</fullName>
        <shortName>Star-PAP</shortName>
        <ecNumber evidence="2">2.7.7.19</ecNumber>
    </recommendedName>
    <alternativeName>
        <fullName>RNA-binding motif protein 21</fullName>
        <shortName>RNA-binding protein 21</shortName>
    </alternativeName>
    <alternativeName>
        <fullName>U6 snRNA-specific terminal uridylyltransferase 1</fullName>
        <shortName>U6-TUTase</shortName>
        <ecNumber evidence="2">2.7.7.52</ecNumber>
    </alternativeName>
</protein>
<organism>
    <name type="scientific">Bos taurus</name>
    <name type="common">Bovine</name>
    <dbReference type="NCBI Taxonomy" id="9913"/>
    <lineage>
        <taxon>Eukaryota</taxon>
        <taxon>Metazoa</taxon>
        <taxon>Chordata</taxon>
        <taxon>Craniata</taxon>
        <taxon>Vertebrata</taxon>
        <taxon>Euteleostomi</taxon>
        <taxon>Mammalia</taxon>
        <taxon>Eutheria</taxon>
        <taxon>Laurasiatheria</taxon>
        <taxon>Artiodactyla</taxon>
        <taxon>Ruminantia</taxon>
        <taxon>Pecora</taxon>
        <taxon>Bovidae</taxon>
        <taxon>Bovinae</taxon>
        <taxon>Bos</taxon>
    </lineage>
</organism>
<dbReference type="EC" id="2.7.7.19" evidence="2"/>
<dbReference type="EC" id="2.7.7.52" evidence="2"/>
<dbReference type="EMBL" id="BT025417">
    <property type="protein sequence ID" value="ABF57373.1"/>
    <property type="molecule type" value="mRNA"/>
</dbReference>
<dbReference type="RefSeq" id="NP_001073791.1">
    <property type="nucleotide sequence ID" value="NM_001080322.1"/>
</dbReference>
<dbReference type="SMR" id="Q1JPD6"/>
<dbReference type="FunCoup" id="Q1JPD6">
    <property type="interactions" value="2571"/>
</dbReference>
<dbReference type="STRING" id="9913.ENSBTAP00000015724"/>
<dbReference type="PaxDb" id="9913-ENSBTAP00000015724"/>
<dbReference type="GeneID" id="616339"/>
<dbReference type="KEGG" id="bta:616339"/>
<dbReference type="CTD" id="64852"/>
<dbReference type="eggNOG" id="KOG2277">
    <property type="taxonomic scope" value="Eukaryota"/>
</dbReference>
<dbReference type="InParanoid" id="Q1JPD6"/>
<dbReference type="OrthoDB" id="2274644at2759"/>
<dbReference type="Proteomes" id="UP000009136">
    <property type="component" value="Unplaced"/>
</dbReference>
<dbReference type="GO" id="GO:0005847">
    <property type="term" value="C:mRNA cleavage and polyadenylation specificity factor complex"/>
    <property type="evidence" value="ECO:0000250"/>
    <property type="project" value="UniProtKB"/>
</dbReference>
<dbReference type="GO" id="GO:0016607">
    <property type="term" value="C:nuclear speck"/>
    <property type="evidence" value="ECO:0000250"/>
    <property type="project" value="UniProtKB"/>
</dbReference>
<dbReference type="GO" id="GO:0005730">
    <property type="term" value="C:nucleolus"/>
    <property type="evidence" value="ECO:0000250"/>
    <property type="project" value="UniProtKB"/>
</dbReference>
<dbReference type="GO" id="GO:0005524">
    <property type="term" value="F:ATP binding"/>
    <property type="evidence" value="ECO:0007669"/>
    <property type="project" value="UniProtKB-KW"/>
</dbReference>
<dbReference type="GO" id="GO:0140767">
    <property type="term" value="F:enzyme-substrate adaptor activity"/>
    <property type="evidence" value="ECO:0000250"/>
    <property type="project" value="UniProtKB"/>
</dbReference>
<dbReference type="GO" id="GO:0003730">
    <property type="term" value="F:mRNA 3'-UTR binding"/>
    <property type="evidence" value="ECO:0000250"/>
    <property type="project" value="UniProtKB"/>
</dbReference>
<dbReference type="GO" id="GO:1990817">
    <property type="term" value="F:poly(A) RNA polymerase activity"/>
    <property type="evidence" value="ECO:0000250"/>
    <property type="project" value="UniProtKB"/>
</dbReference>
<dbReference type="GO" id="GO:0003723">
    <property type="term" value="F:RNA binding"/>
    <property type="evidence" value="ECO:0000250"/>
    <property type="project" value="UniProtKB"/>
</dbReference>
<dbReference type="GO" id="GO:0050265">
    <property type="term" value="F:RNA uridylyltransferase activity"/>
    <property type="evidence" value="ECO:0000250"/>
    <property type="project" value="UniProtKB"/>
</dbReference>
<dbReference type="GO" id="GO:0017070">
    <property type="term" value="F:U6 snRNA binding"/>
    <property type="evidence" value="ECO:0000250"/>
    <property type="project" value="UniProtKB"/>
</dbReference>
<dbReference type="GO" id="GO:0008270">
    <property type="term" value="F:zinc ion binding"/>
    <property type="evidence" value="ECO:0007669"/>
    <property type="project" value="UniProtKB-KW"/>
</dbReference>
<dbReference type="GO" id="GO:0180010">
    <property type="term" value="P:co-transcriptional mRNA 3'-end processing, cleavage and polyadenylation pathway"/>
    <property type="evidence" value="ECO:0000250"/>
    <property type="project" value="UniProtKB"/>
</dbReference>
<dbReference type="GO" id="GO:0031123">
    <property type="term" value="P:RNA 3'-end processing"/>
    <property type="evidence" value="ECO:0000318"/>
    <property type="project" value="GO_Central"/>
</dbReference>
<dbReference type="GO" id="GO:0016180">
    <property type="term" value="P:snRNA processing"/>
    <property type="evidence" value="ECO:0000250"/>
    <property type="project" value="UniProtKB"/>
</dbReference>
<dbReference type="GO" id="GO:0034477">
    <property type="term" value="P:U6 snRNA 3'-end processing"/>
    <property type="evidence" value="ECO:0000250"/>
    <property type="project" value="UniProtKB"/>
</dbReference>
<dbReference type="CDD" id="cd05402">
    <property type="entry name" value="NT_PAP_TUTase"/>
    <property type="match status" value="1"/>
</dbReference>
<dbReference type="CDD" id="cd12279">
    <property type="entry name" value="RRM_TUT1"/>
    <property type="match status" value="1"/>
</dbReference>
<dbReference type="FunFam" id="1.10.1410.10:FF:000008">
    <property type="entry name" value="speckle targeted PIP5K1A-regulated poly(A) polymerase"/>
    <property type="match status" value="1"/>
</dbReference>
<dbReference type="FunFam" id="3.30.70.330:FF:000305">
    <property type="entry name" value="speckle targeted PIP5K1A-regulated poly(A) polymerase"/>
    <property type="match status" value="1"/>
</dbReference>
<dbReference type="Gene3D" id="1.10.1410.10">
    <property type="match status" value="1"/>
</dbReference>
<dbReference type="Gene3D" id="3.30.70.330">
    <property type="match status" value="1"/>
</dbReference>
<dbReference type="InterPro" id="IPR054708">
    <property type="entry name" value="MTPAP-like_central"/>
</dbReference>
<dbReference type="InterPro" id="IPR043519">
    <property type="entry name" value="NT_sf"/>
</dbReference>
<dbReference type="InterPro" id="IPR012677">
    <property type="entry name" value="Nucleotide-bd_a/b_plait_sf"/>
</dbReference>
<dbReference type="InterPro" id="IPR002058">
    <property type="entry name" value="PAP_assoc"/>
</dbReference>
<dbReference type="InterPro" id="IPR035979">
    <property type="entry name" value="RBD_domain_sf"/>
</dbReference>
<dbReference type="InterPro" id="IPR000504">
    <property type="entry name" value="RRM_dom"/>
</dbReference>
<dbReference type="InterPro" id="IPR034388">
    <property type="entry name" value="Star-PAP_RRM"/>
</dbReference>
<dbReference type="InterPro" id="IPR036236">
    <property type="entry name" value="Znf_C2H2_sf"/>
</dbReference>
<dbReference type="InterPro" id="IPR013087">
    <property type="entry name" value="Znf_C2H2_type"/>
</dbReference>
<dbReference type="PANTHER" id="PTHR12271">
    <property type="entry name" value="POLY A POLYMERASE CID PAP -RELATED"/>
    <property type="match status" value="1"/>
</dbReference>
<dbReference type="PANTHER" id="PTHR12271:SF127">
    <property type="entry name" value="SPECKLE TARGETED PIP5K1A-REGULATED POLY(A) POLYMERASE"/>
    <property type="match status" value="1"/>
</dbReference>
<dbReference type="Pfam" id="PF22600">
    <property type="entry name" value="MTPAP-like_central"/>
    <property type="match status" value="2"/>
</dbReference>
<dbReference type="Pfam" id="PF03828">
    <property type="entry name" value="PAP_assoc"/>
    <property type="match status" value="1"/>
</dbReference>
<dbReference type="Pfam" id="PF00076">
    <property type="entry name" value="RRM_1"/>
    <property type="match status" value="1"/>
</dbReference>
<dbReference type="Pfam" id="PF12874">
    <property type="entry name" value="zf-met"/>
    <property type="match status" value="1"/>
</dbReference>
<dbReference type="SMART" id="SM00360">
    <property type="entry name" value="RRM"/>
    <property type="match status" value="1"/>
</dbReference>
<dbReference type="SUPFAM" id="SSF57667">
    <property type="entry name" value="beta-beta-alpha zinc fingers"/>
    <property type="match status" value="1"/>
</dbReference>
<dbReference type="SUPFAM" id="SSF81301">
    <property type="entry name" value="Nucleotidyltransferase"/>
    <property type="match status" value="1"/>
</dbReference>
<dbReference type="SUPFAM" id="SSF81631">
    <property type="entry name" value="PAP/OAS1 substrate-binding domain"/>
    <property type="match status" value="1"/>
</dbReference>
<dbReference type="SUPFAM" id="SSF54928">
    <property type="entry name" value="RNA-binding domain, RBD"/>
    <property type="match status" value="1"/>
</dbReference>
<dbReference type="PROSITE" id="PS50102">
    <property type="entry name" value="RRM"/>
    <property type="match status" value="1"/>
</dbReference>
<gene>
    <name type="primary">TUT1</name>
    <name type="synonym">RBM21</name>
</gene>